<dbReference type="EC" id="1.1.1.-" evidence="8"/>
<dbReference type="EMBL" id="CDMC01000024">
    <property type="protein sequence ID" value="CEL11264.1"/>
    <property type="molecule type" value="Genomic_DNA"/>
</dbReference>
<dbReference type="SMR" id="A0A0U5GHU6"/>
<dbReference type="STRING" id="454130.A0A0U5GHU6"/>
<dbReference type="OMA" id="IALQPHY"/>
<dbReference type="OrthoDB" id="48988at2759"/>
<dbReference type="UniPathway" id="UPA00213"/>
<dbReference type="Proteomes" id="UP000054771">
    <property type="component" value="Unassembled WGS sequence"/>
</dbReference>
<dbReference type="GO" id="GO:0016491">
    <property type="term" value="F:oxidoreductase activity"/>
    <property type="evidence" value="ECO:0007669"/>
    <property type="project" value="UniProtKB-KW"/>
</dbReference>
<dbReference type="GO" id="GO:0016114">
    <property type="term" value="P:terpenoid biosynthetic process"/>
    <property type="evidence" value="ECO:0007669"/>
    <property type="project" value="UniProtKB-UniPathway"/>
</dbReference>
<dbReference type="CDD" id="cd19147">
    <property type="entry name" value="AKR_AKR9A3_9B1-4"/>
    <property type="match status" value="1"/>
</dbReference>
<dbReference type="FunFam" id="3.20.20.100:FF:000024">
    <property type="entry name" value="Aryl-alcohol dehydrogenase"/>
    <property type="match status" value="1"/>
</dbReference>
<dbReference type="Gene3D" id="3.20.20.100">
    <property type="entry name" value="NADP-dependent oxidoreductase domain"/>
    <property type="match status" value="1"/>
</dbReference>
<dbReference type="InterPro" id="IPR050523">
    <property type="entry name" value="AKR_Detox_Biosynth"/>
</dbReference>
<dbReference type="InterPro" id="IPR023210">
    <property type="entry name" value="NADP_OxRdtase_dom"/>
</dbReference>
<dbReference type="InterPro" id="IPR036812">
    <property type="entry name" value="NADP_OxRdtase_dom_sf"/>
</dbReference>
<dbReference type="PANTHER" id="PTHR43364:SF2">
    <property type="entry name" value="ARYL-ALCOHOL DEHYDROGENASE AAD10-RELATED"/>
    <property type="match status" value="1"/>
</dbReference>
<dbReference type="PANTHER" id="PTHR43364">
    <property type="entry name" value="NADH-SPECIFIC METHYLGLYOXAL REDUCTASE-RELATED"/>
    <property type="match status" value="1"/>
</dbReference>
<dbReference type="Pfam" id="PF00248">
    <property type="entry name" value="Aldo_ket_red"/>
    <property type="match status" value="1"/>
</dbReference>
<dbReference type="SUPFAM" id="SSF51430">
    <property type="entry name" value="NAD(P)-linked oxidoreductase"/>
    <property type="match status" value="1"/>
</dbReference>
<sequence>MTGTQILELFGPAPEPPSELGRYRILSPTAGIRVSPLQLGALSIGDAWSADLGSMDKDSAMALLDAYAASGGNFIDTANAYQNEQSETWIGEWMANRNNRDQMVIATKFGPDYRAHELGKGLAVNYSGNHKRSLHMSVRDSLRKLQTSWIDILYLHTWDYTTSVPELMDALHHLVQRGEVLYLGICNTPAWVVSAANTYAQQQGKTQFSVYQGRWNPLRRELERDILPMARHFGMAITVYDALGSGKFQSRKMLARRKDQGEGLRAIYGRQQTAQEEAMSNALGVVAAQHGIESVTAVALAYLLAKAPYVFPIIGGRKIQHLHDNIQALSLRLTHEEIKYLESVGDFDLGFPYDMVGVDPADTGMATPIVAQAAPMAFVQRSKAIGYSESNKGLSE</sequence>
<evidence type="ECO:0000250" key="1">
    <source>
        <dbReference type="UniProtKB" id="C8VQ93"/>
    </source>
</evidence>
<evidence type="ECO:0000250" key="2">
    <source>
        <dbReference type="UniProtKB" id="O43488"/>
    </source>
</evidence>
<evidence type="ECO:0000250" key="3">
    <source>
        <dbReference type="UniProtKB" id="Q8CG76"/>
    </source>
</evidence>
<evidence type="ECO:0000269" key="4">
    <source>
    </source>
</evidence>
<evidence type="ECO:0000269" key="5">
    <source>
    </source>
</evidence>
<evidence type="ECO:0000303" key="6">
    <source>
    </source>
</evidence>
<evidence type="ECO:0000305" key="7"/>
<evidence type="ECO:0000305" key="8">
    <source>
    </source>
</evidence>
<evidence type="ECO:0000305" key="9">
    <source>
    </source>
</evidence>
<proteinExistence type="inferred from homology"/>
<organism>
    <name type="scientific">Aspergillus calidoustus</name>
    <dbReference type="NCBI Taxonomy" id="454130"/>
    <lineage>
        <taxon>Eukaryota</taxon>
        <taxon>Fungi</taxon>
        <taxon>Dikarya</taxon>
        <taxon>Ascomycota</taxon>
        <taxon>Pezizomycotina</taxon>
        <taxon>Eurotiomycetes</taxon>
        <taxon>Eurotiomycetidae</taxon>
        <taxon>Eurotiales</taxon>
        <taxon>Aspergillaceae</taxon>
        <taxon>Aspergillus</taxon>
        <taxon>Aspergillus subgen. Nidulantes</taxon>
    </lineage>
</organism>
<feature type="chain" id="PRO_0000453854" description="Aldo-keto reductase ausK">
    <location>
        <begin position="1"/>
        <end position="396"/>
    </location>
</feature>
<feature type="active site" description="Proton donor" evidence="3">
    <location>
        <position position="81"/>
    </location>
</feature>
<feature type="binding site" evidence="2">
    <location>
        <position position="76"/>
    </location>
    <ligand>
        <name>NADP(+)</name>
        <dbReference type="ChEBI" id="CHEBI:58349"/>
    </ligand>
</feature>
<feature type="binding site" evidence="3">
    <location>
        <position position="156"/>
    </location>
    <ligand>
        <name>substrate</name>
    </ligand>
</feature>
<feature type="binding site" evidence="2">
    <location>
        <begin position="186"/>
        <end position="187"/>
    </location>
    <ligand>
        <name>NADP(+)</name>
        <dbReference type="ChEBI" id="CHEBI:58349"/>
    </ligand>
</feature>
<feature type="binding site" evidence="2">
    <location>
        <position position="212"/>
    </location>
    <ligand>
        <name>NADP(+)</name>
        <dbReference type="ChEBI" id="CHEBI:58349"/>
    </ligand>
</feature>
<feature type="binding site" evidence="2">
    <location>
        <begin position="241"/>
        <end position="251"/>
    </location>
    <ligand>
        <name>NADP(+)</name>
        <dbReference type="ChEBI" id="CHEBI:58349"/>
    </ligand>
</feature>
<feature type="binding site" evidence="2">
    <location>
        <begin position="317"/>
        <end position="325"/>
    </location>
    <ligand>
        <name>NADP(+)</name>
        <dbReference type="ChEBI" id="CHEBI:58349"/>
    </ligand>
</feature>
<gene>
    <name evidence="6" type="primary">ausK</name>
    <name type="ORF">ASPCAL14367</name>
</gene>
<name>AUSK_ASPCI</name>
<accession>A0A0U5GHU6</accession>
<reference key="1">
    <citation type="journal article" date="2016" name="Genome Announc.">
        <title>Draft genome sequences of fungus Aspergillus calidoustus.</title>
        <authorList>
            <person name="Horn F."/>
            <person name="Linde J."/>
            <person name="Mattern D.J."/>
            <person name="Walther G."/>
            <person name="Guthke R."/>
            <person name="Scherlach K."/>
            <person name="Martin K."/>
            <person name="Brakhage A.A."/>
            <person name="Petzke L."/>
            <person name="Valiante V."/>
        </authorList>
    </citation>
    <scope>NUCLEOTIDE SEQUENCE [LARGE SCALE GENOMIC DNA]</scope>
    <source>
        <strain>SF006504</strain>
    </source>
</reference>
<reference key="2">
    <citation type="journal article" date="2017" name="ACS Chem. Biol.">
        <title>Discovery of an Extended Austinoid Biosynthetic Pathway in Aspergillus calidoustus.</title>
        <authorList>
            <person name="Valiante V."/>
            <person name="Mattern D.J."/>
            <person name="Schueffler A."/>
            <person name="Horn F."/>
            <person name="Walther G."/>
            <person name="Scherlach K."/>
            <person name="Petzke L."/>
            <person name="Dickhaut J."/>
            <person name="Guthke R."/>
            <person name="Hertweck C."/>
            <person name="Nett M."/>
            <person name="Thines E."/>
            <person name="Brakhage A.A."/>
        </authorList>
    </citation>
    <scope>FUNCTION</scope>
    <scope>PATHWAY</scope>
</reference>
<reference key="3">
    <citation type="journal article" date="2017" name="ACS Chem. Biol.">
        <title>Rewiring of the austinoid biosynthetic pathway in filamentous fungi.</title>
        <authorList>
            <person name="Mattern D.J."/>
            <person name="Valiante V."/>
            <person name="Horn F."/>
            <person name="Petzke L."/>
            <person name="Brakhage A.A."/>
        </authorList>
    </citation>
    <scope>FUNCTION</scope>
</reference>
<keyword id="KW-0521">NADP</keyword>
<keyword id="KW-0560">Oxidoreductase</keyword>
<keyword id="KW-1185">Reference proteome</keyword>
<protein>
    <recommendedName>
        <fullName evidence="6">Aldo-keto reductase ausK</fullName>
        <ecNumber evidence="8">1.1.1.-</ecNumber>
    </recommendedName>
    <alternativeName>
        <fullName evidence="6">Austinoid biosynthesis cluster protein K</fullName>
    </alternativeName>
</protein>
<comment type="function">
    <text evidence="1 4 5">Aldo-keto reductase; part of the gene cluster that mediates the biosynthesis of calidodehydroaustin, a fungal meroterpenoid (PubMed:28233494, PubMed:29076725). The first step of the pathway is the synthesis of 3,5-dimethylorsellinic acid by the polyketide synthase ausA (PubMed:28233494). 3,5-dimethylorsellinic acid is then prenylated by the polyprenyl transferase ausN (PubMed:28233494). Further epoxidation by the FAD-dependent monooxygenase ausM and cyclization by the probable terpene cyclase ausL lead to the formation of protoaustinoid A (By similarity). Protoaustinoid A is then oxidized to spiro-lactone preaustinoid A3 by the combined action of the FAD-binding monooxygenases ausB and ausC, and the dioxygenase ausE (By similarity). Acid-catalyzed keto-rearrangement and ring contraction of the tetraketide portion of preaustinoid A3 by ausJ lead to the formation of preaustinoid A4 (By similarity). The aldo-keto reductase ausK, with the help of ausH, is involved in the next step by transforming preaustinoid A4 into isoaustinone which is in turn hydroxylated by the P450 monooxygenase ausI to form austinolide (By similarity). The cytochrome P450 monooxygenase ausG modifies austinolide to austinol (By similarity). Austinol is further acetylated to austin by the O-acetyltransferase ausP, which spontaneously changes to dehydroaustin (PubMed:28233494). The cytochrome P450 monooxygenase ausR then converts dehydroaustin is into 7-dehydrodehydroaustin (PubMed:28233494). The hydroxylation catalyzed by ausR permits the O-acetyltransferase ausQ to add an additional acetyl group to the molecule, leading to the formation of acetoxydehydroaustin (PubMed:28233494). The short chain dehydrogenase ausT catalyzes the reduction of the double bond present between carbon atoms 1 and 2 to convert 7-dehydrodehydroaustin into 1,2-dihydro-7-hydroxydehydroaustin (PubMed:28233494). AusQ catalyzes not only an acetylation reaction but also the addition of the PKS ausV diketide product to 1,2-dihydro-7-hydroxydehydroaustin, forming precalidodehydroaustin (PubMed:28233494). Finally, the iron/alpha-ketoglutarate-dependent dioxygenase converts precalidodehydroaustin into calidodehydroaustin (PubMed:28233494).</text>
</comment>
<comment type="pathway">
    <text evidence="8">Secondary metabolite biosynthesis; terpenoid biosynthesis.</text>
</comment>
<comment type="subunit">
    <text evidence="3">Homodimer.</text>
</comment>
<comment type="miscellaneous">
    <text evidence="9">In A.calidoustus, the austinoid gene cluster lies on a contiguous DNA region, while clusters from E.nidulans and P.brasilianum are split in their respective genomes. Genetic rearrangements provoked variability among the clusters and E.nidulans produces the least number of austionoid derivatives with the end products austinol and dehydroaustinol, while P.brasilianum can produce until acetoxydehydroaustin, and A.calidoustus produces the highest number of identified derivatives.</text>
</comment>
<comment type="similarity">
    <text evidence="7">Belongs to the aldo/keto reductase family. Aldo/keto reductase 2 subfamily.</text>
</comment>